<feature type="chain" id="PRO_0000078985" description="Nuclear export protein">
    <location>
        <begin position="1"/>
        <end position="121"/>
    </location>
</feature>
<feature type="short sequence motif" description="Nuclear export signal" evidence="1">
    <location>
        <begin position="12"/>
        <end position="21"/>
    </location>
</feature>
<feature type="short sequence motif" description="Nuclear export signal" evidence="1">
    <location>
        <begin position="85"/>
        <end position="94"/>
    </location>
</feature>
<feature type="sequence variant" description="In strain: A/Fort Monmouth/1/1947-MA.">
    <original>V</original>
    <variation>M</variation>
    <location>
        <position position="31"/>
    </location>
</feature>
<feature type="sequence variant" description="In strain: A/Fort Monmouth/1/1947-MA.">
    <original>L</original>
    <variation>Q</variation>
    <location>
        <position position="34"/>
    </location>
</feature>
<feature type="sequence variant" description="In strain: A/Fort Monmouth/1/1947-MA.">
    <original>G</original>
    <variation>E</variation>
    <location>
        <position position="46"/>
    </location>
</feature>
<feature type="sequence variant" description="In strain: A/Fort Monmouth/1/1947-MA.">
    <original>VRM</original>
    <variation>MRL</variation>
    <location>
        <begin position="50"/>
        <end position="52"/>
    </location>
</feature>
<feature type="sequence variant" description="In strain: A/Fort Monmouth/1/1947-MA.">
    <original>L</original>
    <variation>F</variation>
    <location>
        <position position="58"/>
    </location>
</feature>
<feature type="sequence variant" description="In strain: A/Fort Monmouth/1/1947-MA.">
    <original>F</original>
    <variation>L</variation>
    <location>
        <position position="107"/>
    </location>
</feature>
<dbReference type="EMBL" id="K00577">
    <property type="protein sequence ID" value="AAA43521.1"/>
    <property type="molecule type" value="Genomic_RNA"/>
</dbReference>
<dbReference type="EMBL" id="U02087">
    <property type="protein sequence ID" value="AAA67340.1"/>
    <property type="molecule type" value="Genomic_RNA"/>
</dbReference>
<dbReference type="EMBL" id="AJ238022">
    <property type="protein sequence ID" value="CAB50888.1"/>
    <property type="molecule type" value="Genomic_RNA"/>
</dbReference>
<dbReference type="SMR" id="P03506"/>
<dbReference type="GO" id="GO:0042025">
    <property type="term" value="C:host cell nucleus"/>
    <property type="evidence" value="ECO:0007669"/>
    <property type="project" value="UniProtKB-SubCell"/>
</dbReference>
<dbReference type="GO" id="GO:0044423">
    <property type="term" value="C:virion component"/>
    <property type="evidence" value="ECO:0007669"/>
    <property type="project" value="UniProtKB-UniRule"/>
</dbReference>
<dbReference type="GO" id="GO:0039675">
    <property type="term" value="P:exit of virus from host cell nucleus through nuclear pore"/>
    <property type="evidence" value="ECO:0007669"/>
    <property type="project" value="UniProtKB-UniRule"/>
</dbReference>
<dbReference type="Gene3D" id="1.10.287.230">
    <property type="match status" value="1"/>
</dbReference>
<dbReference type="HAMAP" id="MF_04067">
    <property type="entry name" value="INFV_NEP"/>
    <property type="match status" value="1"/>
</dbReference>
<dbReference type="InterPro" id="IPR000968">
    <property type="entry name" value="Flu_NS2"/>
</dbReference>
<dbReference type="Pfam" id="PF00601">
    <property type="entry name" value="Flu_NS2"/>
    <property type="match status" value="1"/>
</dbReference>
<dbReference type="SUPFAM" id="SSF101156">
    <property type="entry name" value="Nonstructural protein ns2, Nep, M1-binding domain"/>
    <property type="match status" value="1"/>
</dbReference>
<keyword id="KW-0025">Alternative splicing</keyword>
<keyword id="KW-1048">Host nucleus</keyword>
<keyword id="KW-0945">Host-virus interaction</keyword>
<keyword id="KW-0813">Transport</keyword>
<keyword id="KW-0946">Virion</keyword>
<organism>
    <name type="scientific">Influenza A virus (strain A/Fort Monmouth/1/1947 H1N1)</name>
    <dbReference type="NCBI Taxonomy" id="380282"/>
    <lineage>
        <taxon>Viruses</taxon>
        <taxon>Riboviria</taxon>
        <taxon>Orthornavirae</taxon>
        <taxon>Negarnaviricota</taxon>
        <taxon>Polyploviricotina</taxon>
        <taxon>Insthoviricetes</taxon>
        <taxon>Articulavirales</taxon>
        <taxon>Orthomyxoviridae</taxon>
        <taxon>Alphainfluenzavirus</taxon>
        <taxon>Alphainfluenzavirus influenzae</taxon>
        <taxon>Influenza A virus</taxon>
    </lineage>
</organism>
<comment type="function">
    <text evidence="1">Mediates the nuclear export of encapsidated genomic RNAs (ribonucleoproteins, RNPs). Acts as an adapter between viral RNPs complexes and the nuclear export machinery of the cell. Possesses no intrinsic RNA-binding activity, but includes a C-terminal M1-binding domain. This domain is believed to allow recognition of RNPs bound to the protein M1. Since protein M1 is not available in large quantities before late stages of infection, such an indirect recognition mechanism probably ensures that genomic RNPs are not exported from the host nucleus until sufficient quantities of viral mRNA and progeny genomic RNA have been synthesized. Furthermore, the RNPs enter the host cytoplasm only when associated with the M1 protein that is necessary to guide them to the plasma membrane. May down-regulate viral RNA synthesis when overproduced.</text>
</comment>
<comment type="subunit">
    <text evidence="1">Interacts with protein M1. May interact with host nucleoporin RAB/HRB and exportin XPO1/CRM1.</text>
</comment>
<comment type="subcellular location">
    <subcellularLocation>
        <location evidence="1">Virion</location>
    </subcellularLocation>
    <subcellularLocation>
        <location evidence="1">Host nucleus</location>
    </subcellularLocation>
</comment>
<comment type="alternative products">
    <event type="alternative splicing"/>
    <isoform>
        <id>P03506-1</id>
        <name>NEP</name>
        <name>NS2</name>
        <sequence type="displayed"/>
    </isoform>
    <isoform>
        <id>P03499-1</id>
        <name>NS1</name>
        <sequence type="external"/>
    </isoform>
</comment>
<comment type="miscellaneous">
    <text>Average number present in a viral particle is estimated to be 130-200 molecules.</text>
</comment>
<comment type="similarity">
    <text evidence="1">Belongs to the influenza viruses NEP family.</text>
</comment>
<accession>P03506</accession>
<accession>Q77AL4</accession>
<sequence>MDPNTVSSFQDILMRMSKMQLGSSSEDLNGVITLFESLKLYRDSLGEAVVRMGDLHSLQNRNGKWREQLGQKFEEIRWLIEEVRHRLKITENSFEQITFMQALQLLFEVEQEIRTFSFQLI</sequence>
<proteinExistence type="inferred from homology"/>
<protein>
    <recommendedName>
        <fullName evidence="1">Nuclear export protein</fullName>
        <shortName evidence="1">NEP</shortName>
    </recommendedName>
    <alternativeName>
        <fullName evidence="1">Non-structural protein 2</fullName>
        <shortName evidence="1">NS2</shortName>
    </alternativeName>
</protein>
<reference key="1">
    <citation type="journal article" date="1983" name="J. Virol.">
        <title>Sequential mutations in the NS genes of influenza virus field strains.</title>
        <authorList>
            <person name="Krystal M."/>
            <person name="Buonagurio D.A."/>
            <person name="Young J.F."/>
            <person name="Palese P."/>
        </authorList>
    </citation>
    <scope>NUCLEOTIDE SEQUENCE [GENOMIC RNA]</scope>
    <source>
        <strain>A/Fort Monmouth/1/1947-MA</strain>
    </source>
</reference>
<reference key="2">
    <citation type="journal article" date="1994" name="J. Virol.">
        <title>The influenza virus variant A/FM/1/47-MA possesses single amino acid replacements in the hemagglutinin, controlling virulence, and in the matrix protein, controlling virulence as well as growth.</title>
        <authorList>
            <person name="Smeenk C.A."/>
            <person name="Brown E.G."/>
        </authorList>
    </citation>
    <scope>NUCLEOTIDE SEQUENCE [GENOMIC RNA]</scope>
</reference>
<evidence type="ECO:0000255" key="1">
    <source>
        <dbReference type="HAMAP-Rule" id="MF_04067"/>
    </source>
</evidence>
<organismHost>
    <name type="scientific">Aves</name>
    <dbReference type="NCBI Taxonomy" id="8782"/>
</organismHost>
<organismHost>
    <name type="scientific">Homo sapiens</name>
    <name type="common">Human</name>
    <dbReference type="NCBI Taxonomy" id="9606"/>
</organismHost>
<organismHost>
    <name type="scientific">Sus scrofa</name>
    <name type="common">Pig</name>
    <dbReference type="NCBI Taxonomy" id="9823"/>
</organismHost>
<gene>
    <name evidence="1" type="primary">NS</name>
</gene>
<name>NEP_I47A0</name>